<gene>
    <name evidence="1" type="primary">trpD</name>
    <name type="ordered locus">YPN_1675</name>
    <name type="ORF">YP516_1863</name>
</gene>
<reference key="1">
    <citation type="journal article" date="2006" name="J. Bacteriol.">
        <title>Complete genome sequence of Yersinia pestis strains Antiqua and Nepal516: evidence of gene reduction in an emerging pathogen.</title>
        <authorList>
            <person name="Chain P.S.G."/>
            <person name="Hu P."/>
            <person name="Malfatti S.A."/>
            <person name="Radnedge L."/>
            <person name="Larimer F."/>
            <person name="Vergez L.M."/>
            <person name="Worsham P."/>
            <person name="Chu M.C."/>
            <person name="Andersen G.L."/>
        </authorList>
    </citation>
    <scope>NUCLEOTIDE SEQUENCE [LARGE SCALE GENOMIC DNA]</scope>
    <source>
        <strain>Nepal516</strain>
    </source>
</reference>
<reference key="2">
    <citation type="submission" date="2009-04" db="EMBL/GenBank/DDBJ databases">
        <title>Yersinia pestis Nepal516A whole genome shotgun sequencing project.</title>
        <authorList>
            <person name="Plunkett G. III"/>
            <person name="Anderson B.D."/>
            <person name="Baumler D.J."/>
            <person name="Burland V."/>
            <person name="Cabot E.L."/>
            <person name="Glasner J.D."/>
            <person name="Mau B."/>
            <person name="Neeno-Eckwall E."/>
            <person name="Perna N.T."/>
            <person name="Munk A.C."/>
            <person name="Tapia R."/>
            <person name="Green L.D."/>
            <person name="Rogers Y.C."/>
            <person name="Detter J.C."/>
            <person name="Bruce D.C."/>
            <person name="Brettin T.S."/>
        </authorList>
    </citation>
    <scope>NUCLEOTIDE SEQUENCE [LARGE SCALE GENOMIC DNA]</scope>
    <source>
        <strain>Nepal516</strain>
    </source>
</reference>
<organism>
    <name type="scientific">Yersinia pestis bv. Antiqua (strain Nepal516)</name>
    <dbReference type="NCBI Taxonomy" id="377628"/>
    <lineage>
        <taxon>Bacteria</taxon>
        <taxon>Pseudomonadati</taxon>
        <taxon>Pseudomonadota</taxon>
        <taxon>Gammaproteobacteria</taxon>
        <taxon>Enterobacterales</taxon>
        <taxon>Yersiniaceae</taxon>
        <taxon>Yersinia</taxon>
    </lineage>
</organism>
<dbReference type="EC" id="2.4.2.18" evidence="1"/>
<dbReference type="EMBL" id="CP000305">
    <property type="protein sequence ID" value="ABG18004.1"/>
    <property type="molecule type" value="Genomic_DNA"/>
</dbReference>
<dbReference type="EMBL" id="ACNQ01000009">
    <property type="protein sequence ID" value="EEO77128.1"/>
    <property type="molecule type" value="Genomic_DNA"/>
</dbReference>
<dbReference type="SMR" id="Q1CJ26"/>
<dbReference type="KEGG" id="ypn:YPN_1675"/>
<dbReference type="HOGENOM" id="CLU_034315_2_1_6"/>
<dbReference type="UniPathway" id="UPA00035">
    <property type="reaction ID" value="UER00041"/>
</dbReference>
<dbReference type="Proteomes" id="UP000008936">
    <property type="component" value="Chromosome"/>
</dbReference>
<dbReference type="GO" id="GO:0005829">
    <property type="term" value="C:cytosol"/>
    <property type="evidence" value="ECO:0007669"/>
    <property type="project" value="TreeGrafter"/>
</dbReference>
<dbReference type="GO" id="GO:0004048">
    <property type="term" value="F:anthranilate phosphoribosyltransferase activity"/>
    <property type="evidence" value="ECO:0007669"/>
    <property type="project" value="UniProtKB-UniRule"/>
</dbReference>
<dbReference type="GO" id="GO:0000287">
    <property type="term" value="F:magnesium ion binding"/>
    <property type="evidence" value="ECO:0007669"/>
    <property type="project" value="UniProtKB-UniRule"/>
</dbReference>
<dbReference type="GO" id="GO:0000162">
    <property type="term" value="P:L-tryptophan biosynthetic process"/>
    <property type="evidence" value="ECO:0007669"/>
    <property type="project" value="UniProtKB-UniRule"/>
</dbReference>
<dbReference type="FunFam" id="1.20.970.10:FF:000003">
    <property type="entry name" value="Anthranilate phosphoribosyltransferase"/>
    <property type="match status" value="1"/>
</dbReference>
<dbReference type="FunFam" id="3.40.1030.10:FF:000002">
    <property type="entry name" value="Anthranilate phosphoribosyltransferase"/>
    <property type="match status" value="1"/>
</dbReference>
<dbReference type="Gene3D" id="3.40.1030.10">
    <property type="entry name" value="Nucleoside phosphorylase/phosphoribosyltransferase catalytic domain"/>
    <property type="match status" value="1"/>
</dbReference>
<dbReference type="Gene3D" id="1.20.970.10">
    <property type="entry name" value="Transferase, Pyrimidine Nucleoside Phosphorylase, Chain C"/>
    <property type="match status" value="1"/>
</dbReference>
<dbReference type="HAMAP" id="MF_00211">
    <property type="entry name" value="TrpD"/>
    <property type="match status" value="1"/>
</dbReference>
<dbReference type="InterPro" id="IPR005940">
    <property type="entry name" value="Anthranilate_Pribosyl_Tfrase"/>
</dbReference>
<dbReference type="InterPro" id="IPR000312">
    <property type="entry name" value="Glycosyl_Trfase_fam3"/>
</dbReference>
<dbReference type="InterPro" id="IPR017459">
    <property type="entry name" value="Glycosyl_Trfase_fam3_N_dom"/>
</dbReference>
<dbReference type="InterPro" id="IPR036320">
    <property type="entry name" value="Glycosyl_Trfase_fam3_N_dom_sf"/>
</dbReference>
<dbReference type="InterPro" id="IPR035902">
    <property type="entry name" value="Nuc_phospho_transferase"/>
</dbReference>
<dbReference type="NCBIfam" id="TIGR01245">
    <property type="entry name" value="trpD"/>
    <property type="match status" value="1"/>
</dbReference>
<dbReference type="PANTHER" id="PTHR43285">
    <property type="entry name" value="ANTHRANILATE PHOSPHORIBOSYLTRANSFERASE"/>
    <property type="match status" value="1"/>
</dbReference>
<dbReference type="PANTHER" id="PTHR43285:SF2">
    <property type="entry name" value="ANTHRANILATE PHOSPHORIBOSYLTRANSFERASE"/>
    <property type="match status" value="1"/>
</dbReference>
<dbReference type="Pfam" id="PF02885">
    <property type="entry name" value="Glycos_trans_3N"/>
    <property type="match status" value="1"/>
</dbReference>
<dbReference type="Pfam" id="PF00591">
    <property type="entry name" value="Glycos_transf_3"/>
    <property type="match status" value="1"/>
</dbReference>
<dbReference type="SUPFAM" id="SSF52418">
    <property type="entry name" value="Nucleoside phosphorylase/phosphoribosyltransferase catalytic domain"/>
    <property type="match status" value="1"/>
</dbReference>
<dbReference type="SUPFAM" id="SSF47648">
    <property type="entry name" value="Nucleoside phosphorylase/phosphoribosyltransferase N-terminal domain"/>
    <property type="match status" value="1"/>
</dbReference>
<name>TRPD_YERPN</name>
<evidence type="ECO:0000255" key="1">
    <source>
        <dbReference type="HAMAP-Rule" id="MF_00211"/>
    </source>
</evidence>
<protein>
    <recommendedName>
        <fullName evidence="1">Anthranilate phosphoribosyltransferase</fullName>
        <ecNumber evidence="1">2.4.2.18</ecNumber>
    </recommendedName>
</protein>
<proteinExistence type="inferred from homology"/>
<accession>Q1CJ26</accession>
<accession>C4GSW8</accession>
<keyword id="KW-0028">Amino-acid biosynthesis</keyword>
<keyword id="KW-0057">Aromatic amino acid biosynthesis</keyword>
<keyword id="KW-0328">Glycosyltransferase</keyword>
<keyword id="KW-0460">Magnesium</keyword>
<keyword id="KW-0479">Metal-binding</keyword>
<keyword id="KW-0808">Transferase</keyword>
<keyword id="KW-0822">Tryptophan biosynthesis</keyword>
<comment type="function">
    <text evidence="1">Catalyzes the transfer of the phosphoribosyl group of 5-phosphorylribose-1-pyrophosphate (PRPP) to anthranilate to yield N-(5'-phosphoribosyl)-anthranilate (PRA).</text>
</comment>
<comment type="catalytic activity">
    <reaction evidence="1">
        <text>N-(5-phospho-beta-D-ribosyl)anthranilate + diphosphate = 5-phospho-alpha-D-ribose 1-diphosphate + anthranilate</text>
        <dbReference type="Rhea" id="RHEA:11768"/>
        <dbReference type="ChEBI" id="CHEBI:16567"/>
        <dbReference type="ChEBI" id="CHEBI:18277"/>
        <dbReference type="ChEBI" id="CHEBI:33019"/>
        <dbReference type="ChEBI" id="CHEBI:58017"/>
        <dbReference type="EC" id="2.4.2.18"/>
    </reaction>
</comment>
<comment type="cofactor">
    <cofactor evidence="1">
        <name>Mg(2+)</name>
        <dbReference type="ChEBI" id="CHEBI:18420"/>
    </cofactor>
    <text evidence="1">Binds 2 magnesium ions per monomer.</text>
</comment>
<comment type="pathway">
    <text evidence="1">Amino-acid biosynthesis; L-tryptophan biosynthesis; L-tryptophan from chorismate: step 2/5.</text>
</comment>
<comment type="subunit">
    <text evidence="1">Homodimer.</text>
</comment>
<comment type="similarity">
    <text evidence="1">Belongs to the anthranilate phosphoribosyltransferase family.</text>
</comment>
<sequence length="332" mass="35499">MQHLFEKLFRAESMSQEESQQLFAAIVRGELEPSQLAAVLISMKVRGETPAEIAGAAQALLADAQHFPRPDYLFADIVGTGGDGTNSINISTASAFVAASCGVKVAKHGNRSVSSRSGSSDLLAAFGIRLDMSAEQSRLALDDLGVCFLFAPQYHTGFRHAMPVRQQLKTRTLFNVLGPLINPARPPLALIGVYSPELVLPIAQTLKVLGYQRAAVVHGGGMDEVAIHAPTQVAELNNGSIESYQLTPEDFGLNRYPLAALQGGMPEENRDILARLLQGKGETAHAAAVAANVALLLKLYGQENLRHNAQQALEMIHSGQAFDRVTALAARG</sequence>
<feature type="chain" id="PRO_1000043082" description="Anthranilate phosphoribosyltransferase">
    <location>
        <begin position="1"/>
        <end position="332"/>
    </location>
</feature>
<feature type="binding site" evidence="1">
    <location>
        <position position="79"/>
    </location>
    <ligand>
        <name>5-phospho-alpha-D-ribose 1-diphosphate</name>
        <dbReference type="ChEBI" id="CHEBI:58017"/>
    </ligand>
</feature>
<feature type="binding site" evidence="1">
    <location>
        <position position="79"/>
    </location>
    <ligand>
        <name>anthranilate</name>
        <dbReference type="ChEBI" id="CHEBI:16567"/>
        <label>1</label>
    </ligand>
</feature>
<feature type="binding site" evidence="1">
    <location>
        <begin position="82"/>
        <end position="83"/>
    </location>
    <ligand>
        <name>5-phospho-alpha-D-ribose 1-diphosphate</name>
        <dbReference type="ChEBI" id="CHEBI:58017"/>
    </ligand>
</feature>
<feature type="binding site" evidence="1">
    <location>
        <position position="87"/>
    </location>
    <ligand>
        <name>5-phospho-alpha-D-ribose 1-diphosphate</name>
        <dbReference type="ChEBI" id="CHEBI:58017"/>
    </ligand>
</feature>
<feature type="binding site" evidence="1">
    <location>
        <begin position="89"/>
        <end position="92"/>
    </location>
    <ligand>
        <name>5-phospho-alpha-D-ribose 1-diphosphate</name>
        <dbReference type="ChEBI" id="CHEBI:58017"/>
    </ligand>
</feature>
<feature type="binding site" evidence="1">
    <location>
        <position position="91"/>
    </location>
    <ligand>
        <name>Mg(2+)</name>
        <dbReference type="ChEBI" id="CHEBI:18420"/>
        <label>1</label>
    </ligand>
</feature>
<feature type="binding site" evidence="1">
    <location>
        <begin position="107"/>
        <end position="115"/>
    </location>
    <ligand>
        <name>5-phospho-alpha-D-ribose 1-diphosphate</name>
        <dbReference type="ChEBI" id="CHEBI:58017"/>
    </ligand>
</feature>
<feature type="binding site" evidence="1">
    <location>
        <position position="110"/>
    </location>
    <ligand>
        <name>anthranilate</name>
        <dbReference type="ChEBI" id="CHEBI:16567"/>
        <label>1</label>
    </ligand>
</feature>
<feature type="binding site" evidence="1">
    <location>
        <position position="119"/>
    </location>
    <ligand>
        <name>5-phospho-alpha-D-ribose 1-diphosphate</name>
        <dbReference type="ChEBI" id="CHEBI:58017"/>
    </ligand>
</feature>
<feature type="binding site" evidence="1">
    <location>
        <position position="165"/>
    </location>
    <ligand>
        <name>anthranilate</name>
        <dbReference type="ChEBI" id="CHEBI:16567"/>
        <label>2</label>
    </ligand>
</feature>
<feature type="binding site" evidence="1">
    <location>
        <position position="223"/>
    </location>
    <ligand>
        <name>Mg(2+)</name>
        <dbReference type="ChEBI" id="CHEBI:18420"/>
        <label>2</label>
    </ligand>
</feature>
<feature type="binding site" evidence="1">
    <location>
        <position position="224"/>
    </location>
    <ligand>
        <name>Mg(2+)</name>
        <dbReference type="ChEBI" id="CHEBI:18420"/>
        <label>1</label>
    </ligand>
</feature>
<feature type="binding site" evidence="1">
    <location>
        <position position="224"/>
    </location>
    <ligand>
        <name>Mg(2+)</name>
        <dbReference type="ChEBI" id="CHEBI:18420"/>
        <label>2</label>
    </ligand>
</feature>